<dbReference type="EC" id="1.1.1.-" evidence="4"/>
<dbReference type="EMBL" id="KU295569">
    <property type="protein sequence ID" value="AOP04255.1"/>
    <property type="molecule type" value="mRNA"/>
</dbReference>
<dbReference type="SMR" id="A0A1C9II22"/>
<dbReference type="KEGG" id="ag:AOP04255"/>
<dbReference type="GO" id="GO:0016491">
    <property type="term" value="F:oxidoreductase activity"/>
    <property type="evidence" value="ECO:0007669"/>
    <property type="project" value="UniProtKB-KW"/>
</dbReference>
<dbReference type="GO" id="GO:0009820">
    <property type="term" value="P:alkaloid metabolic process"/>
    <property type="evidence" value="ECO:0007669"/>
    <property type="project" value="UniProtKB-KW"/>
</dbReference>
<dbReference type="FunFam" id="3.40.50.720:FF:000084">
    <property type="entry name" value="Short-chain dehydrogenase reductase"/>
    <property type="match status" value="1"/>
</dbReference>
<dbReference type="Gene3D" id="3.40.50.720">
    <property type="entry name" value="NAD(P)-binding Rossmann-like Domain"/>
    <property type="match status" value="1"/>
</dbReference>
<dbReference type="InterPro" id="IPR036291">
    <property type="entry name" value="NAD(P)-bd_dom_sf"/>
</dbReference>
<dbReference type="InterPro" id="IPR020904">
    <property type="entry name" value="Sc_DH/Rdtase_CS"/>
</dbReference>
<dbReference type="InterPro" id="IPR002347">
    <property type="entry name" value="SDR_fam"/>
</dbReference>
<dbReference type="InterPro" id="IPR045000">
    <property type="entry name" value="TR"/>
</dbReference>
<dbReference type="PANTHER" id="PTHR42898:SF6">
    <property type="entry name" value="NADP-DEPENDENT MANNITOL DEHYDROGENASE"/>
    <property type="match status" value="1"/>
</dbReference>
<dbReference type="PANTHER" id="PTHR42898">
    <property type="entry name" value="TROPINONE REDUCTASE"/>
    <property type="match status" value="1"/>
</dbReference>
<dbReference type="Pfam" id="PF13561">
    <property type="entry name" value="adh_short_C2"/>
    <property type="match status" value="1"/>
</dbReference>
<dbReference type="PRINTS" id="PR00081">
    <property type="entry name" value="GDHRDH"/>
</dbReference>
<dbReference type="PRINTS" id="PR00080">
    <property type="entry name" value="SDRFAMILY"/>
</dbReference>
<dbReference type="SUPFAM" id="SSF51735">
    <property type="entry name" value="NAD(P)-binding Rossmann-fold domains"/>
    <property type="match status" value="1"/>
</dbReference>
<dbReference type="PROSITE" id="PS00061">
    <property type="entry name" value="ADH_SHORT"/>
    <property type="match status" value="1"/>
</dbReference>
<sequence length="257" mass="27605">MSLEKRWSLEGTTALVTGGTKGIGHAIVEELVGFGARVYTCSRNEAELRKCLQEWENLKYDVTGSVCDVSSRTEREKLAEEVSSVFNGKLNILINNAGGYVNKPIDGFTAEDFSFLVAVNLESAFHLCQLAHPMLKASGTGSIVHISSCCAQIAIPGHSIYSSTKGAINQLTRNLACEWAKDNIRTNSIAPGAIRTPGTESFVIDKDALDREVSRVPFGRIGEPEEVASLAAFLCMPSASYITGQVICVDGGRTING</sequence>
<name>NR_NARAP</name>
<comment type="function">
    <text evidence="4">In the Amaryllidaceae alkaloids biosynthesic pathway, catalyzes the conversion of noroxomaritidine to oxomaritidine, a precursor of haemanthamine- and crinamine-type alkaloids, promising anticancer agents (PubMed:27252378). Can also, to some extent, catalyze the condensation of 3,4-dihydroxybenzaldehyde (3,4-DHBA) and tyramine to produce norbelladine, and of isovanillin and tyramine to produce 4'-O-methylnorbelladine (PubMed:27252378).</text>
</comment>
<comment type="catalytic activity">
    <reaction evidence="4">
        <text>(10bR,4aS)-noroxomaritidine + NADPH + H(+) = (10bR,4aS)-oxomaritidine + NADP(+)</text>
        <dbReference type="Rhea" id="RHEA:63196"/>
        <dbReference type="ChEBI" id="CHEBI:15378"/>
        <dbReference type="ChEBI" id="CHEBI:57783"/>
        <dbReference type="ChEBI" id="CHEBI:58349"/>
        <dbReference type="ChEBI" id="CHEBI:133995"/>
        <dbReference type="ChEBI" id="CHEBI:146208"/>
    </reaction>
    <physiologicalReaction direction="left-to-right" evidence="4">
        <dbReference type="Rhea" id="RHEA:63197"/>
    </physiologicalReaction>
</comment>
<comment type="catalytic activity">
    <reaction evidence="4">
        <text>(10bS,4aR)-noroxomaritidine + NADPH + H(+) = (10bS,4aR)-oxomaritidine + NADP(+)</text>
        <dbReference type="Rhea" id="RHEA:63200"/>
        <dbReference type="ChEBI" id="CHEBI:15378"/>
        <dbReference type="ChEBI" id="CHEBI:57783"/>
        <dbReference type="ChEBI" id="CHEBI:58349"/>
        <dbReference type="ChEBI" id="CHEBI:133996"/>
        <dbReference type="ChEBI" id="CHEBI:146209"/>
    </reaction>
    <physiologicalReaction direction="left-to-right" evidence="4">
        <dbReference type="Rhea" id="RHEA:63201"/>
    </physiologicalReaction>
</comment>
<comment type="biophysicochemical properties">
    <phDependence>
        <text evidence="4">Optimum pH is 6.</text>
    </phDependence>
    <temperatureDependence>
        <text evidence="4">Optimum temperature is 35 degrees Celsius.</text>
    </temperatureDependence>
</comment>
<comment type="pathway">
    <text evidence="4">Alkaloid biosynthesis.</text>
</comment>
<comment type="similarity">
    <text evidence="6">Belongs to the short-chain dehydrogenases/reductases (SDR) family. SDR65C subfamily.</text>
</comment>
<protein>
    <recommendedName>
        <fullName evidence="5">Noroxomaritidine/norcraugsodine reductase</fullName>
        <shortName evidence="6">NorRed</shortName>
        <ecNumber evidence="4">1.1.1.-</ecNumber>
    </recommendedName>
</protein>
<accession>A0A1C9II22</accession>
<gene>
    <name evidence="5" type="primary">NR</name>
</gene>
<reference key="1">
    <citation type="journal article" date="2016" name="J. Biol. Chem.">
        <title>Identification of a noroxomaritidine reductase with amaryllidaceae alkaloid biosynthesis related activities.</title>
        <authorList>
            <person name="Kilgore M.B."/>
            <person name="Holland C.K."/>
            <person name="Jez J.M."/>
            <person name="Kutchan T.M."/>
        </authorList>
    </citation>
    <scope>NUCLEOTIDE SEQUENCE [MRNA]</scope>
    <scope>FUNCTION</scope>
    <scope>CATALYTIC ACTIVITY</scope>
    <scope>PATHWAY</scope>
    <scope>BIOPHYSICOCHEMICAL PROPERTIES</scope>
</reference>
<evidence type="ECO:0000250" key="1">
    <source>
        <dbReference type="UniProtKB" id="A0A1A9TAK5"/>
    </source>
</evidence>
<evidence type="ECO:0000250" key="2">
    <source>
        <dbReference type="UniProtKB" id="P50162"/>
    </source>
</evidence>
<evidence type="ECO:0000255" key="3">
    <source>
        <dbReference type="PROSITE-ProRule" id="PRU10001"/>
    </source>
</evidence>
<evidence type="ECO:0000269" key="4">
    <source>
    </source>
</evidence>
<evidence type="ECO:0000303" key="5">
    <source>
    </source>
</evidence>
<evidence type="ECO:0000305" key="6"/>
<keyword id="KW-0017">Alkaloid metabolism</keyword>
<keyword id="KW-0521">NADP</keyword>
<keyword id="KW-0560">Oxidoreductase</keyword>
<organism>
    <name type="scientific">Narcissus aff. pseudonarcissus MK-2014</name>
    <name type="common">Daffodil</name>
    <dbReference type="NCBI Taxonomy" id="1540222"/>
    <lineage>
        <taxon>Eukaryota</taxon>
        <taxon>Viridiplantae</taxon>
        <taxon>Streptophyta</taxon>
        <taxon>Embryophyta</taxon>
        <taxon>Tracheophyta</taxon>
        <taxon>Spermatophyta</taxon>
        <taxon>Magnoliopsida</taxon>
        <taxon>Liliopsida</taxon>
        <taxon>Asparagales</taxon>
        <taxon>Amaryllidaceae</taxon>
        <taxon>Amaryllidoideae</taxon>
        <taxon>Narcissus</taxon>
    </lineage>
</organism>
<feature type="chain" id="PRO_0000450650" description="Noroxomaritidine/norcraugsodine reductase">
    <location>
        <begin position="1"/>
        <end position="257"/>
    </location>
</feature>
<feature type="active site" description="Proton acceptor" evidence="3">
    <location>
        <position position="161"/>
    </location>
</feature>
<feature type="binding site" evidence="2">
    <location>
        <begin position="15"/>
        <end position="39"/>
    </location>
    <ligand>
        <name>NADP(+)</name>
        <dbReference type="ChEBI" id="CHEBI:58349"/>
    </ligand>
</feature>
<feature type="binding site" evidence="1">
    <location>
        <begin position="20"/>
        <end position="23"/>
    </location>
    <ligand>
        <name>NADP(+)</name>
        <dbReference type="ChEBI" id="CHEBI:58349"/>
    </ligand>
</feature>
<feature type="binding site" evidence="1">
    <location>
        <begin position="42"/>
        <end position="43"/>
    </location>
    <ligand>
        <name>NADP(+)</name>
        <dbReference type="ChEBI" id="CHEBI:58349"/>
    </ligand>
</feature>
<feature type="binding site" evidence="1">
    <location>
        <begin position="68"/>
        <end position="69"/>
    </location>
    <ligand>
        <name>NADP(+)</name>
        <dbReference type="ChEBI" id="CHEBI:58349"/>
    </ligand>
</feature>
<feature type="binding site" evidence="1">
    <location>
        <begin position="96"/>
        <end position="98"/>
    </location>
    <ligand>
        <name>NADP(+)</name>
        <dbReference type="ChEBI" id="CHEBI:58349"/>
    </ligand>
</feature>
<feature type="binding site" evidence="1">
    <location>
        <position position="100"/>
    </location>
    <ligand>
        <name>substrate</name>
    </ligand>
</feature>
<feature type="binding site" evidence="2">
    <location>
        <position position="148"/>
    </location>
    <ligand>
        <name>substrate</name>
    </ligand>
</feature>
<feature type="binding site" evidence="1">
    <location>
        <position position="149"/>
    </location>
    <ligand>
        <name>substrate</name>
    </ligand>
</feature>
<feature type="binding site" evidence="1">
    <location>
        <position position="161"/>
    </location>
    <ligand>
        <name>NADP(+)</name>
        <dbReference type="ChEBI" id="CHEBI:58349"/>
    </ligand>
</feature>
<feature type="binding site" evidence="1">
    <location>
        <position position="165"/>
    </location>
    <ligand>
        <name>NADP(+)</name>
        <dbReference type="ChEBI" id="CHEBI:58349"/>
    </ligand>
</feature>
<feature type="binding site" evidence="1">
    <location>
        <begin position="194"/>
        <end position="199"/>
    </location>
    <ligand>
        <name>NADP(+)</name>
        <dbReference type="ChEBI" id="CHEBI:58349"/>
    </ligand>
</feature>
<proteinExistence type="evidence at protein level"/>